<accession>Q54YN2</accession>
<dbReference type="EC" id="5.2.1.2"/>
<dbReference type="EMBL" id="AAFI02000023">
    <property type="protein sequence ID" value="EAL68250.1"/>
    <property type="molecule type" value="Genomic_DNA"/>
</dbReference>
<dbReference type="RefSeq" id="XP_642170.1">
    <property type="nucleotide sequence ID" value="XM_637078.1"/>
</dbReference>
<dbReference type="SMR" id="Q54YN2"/>
<dbReference type="FunCoup" id="Q54YN2">
    <property type="interactions" value="196"/>
</dbReference>
<dbReference type="STRING" id="44689.Q54YN2"/>
<dbReference type="PaxDb" id="44689-DDB0231608"/>
<dbReference type="EnsemblProtists" id="EAL68250">
    <property type="protein sequence ID" value="EAL68250"/>
    <property type="gene ID" value="DDB_G0278155"/>
</dbReference>
<dbReference type="GeneID" id="8621377"/>
<dbReference type="KEGG" id="ddi:DDB_G0278155"/>
<dbReference type="dictyBase" id="DDB_G0278155">
    <property type="gene designation" value="mai"/>
</dbReference>
<dbReference type="VEuPathDB" id="AmoebaDB:DDB_G0278155"/>
<dbReference type="eggNOG" id="KOG0868">
    <property type="taxonomic scope" value="Eukaryota"/>
</dbReference>
<dbReference type="HOGENOM" id="CLU_011226_20_1_1"/>
<dbReference type="InParanoid" id="Q54YN2"/>
<dbReference type="OMA" id="VYNAHRF"/>
<dbReference type="PhylomeDB" id="Q54YN2"/>
<dbReference type="Reactome" id="R-DDI-156590">
    <property type="pathway name" value="Glutathione conjugation"/>
</dbReference>
<dbReference type="Reactome" id="R-DDI-204174">
    <property type="pathway name" value="Regulation of pyruvate dehydrogenase (PDH) complex"/>
</dbReference>
<dbReference type="Reactome" id="R-DDI-8963684">
    <property type="pathway name" value="Tyrosine catabolism"/>
</dbReference>
<dbReference type="UniPathway" id="UPA00139">
    <property type="reaction ID" value="UER00340"/>
</dbReference>
<dbReference type="PRO" id="PR:Q54YN2"/>
<dbReference type="Proteomes" id="UP000002195">
    <property type="component" value="Chromosome 3"/>
</dbReference>
<dbReference type="GO" id="GO:0005739">
    <property type="term" value="C:mitochondrion"/>
    <property type="evidence" value="ECO:0000318"/>
    <property type="project" value="GO_Central"/>
</dbReference>
<dbReference type="GO" id="GO:0004364">
    <property type="term" value="F:glutathione transferase activity"/>
    <property type="evidence" value="ECO:0000250"/>
    <property type="project" value="dictyBase"/>
</dbReference>
<dbReference type="GO" id="GO:0016034">
    <property type="term" value="F:maleylacetoacetate isomerase activity"/>
    <property type="evidence" value="ECO:0000250"/>
    <property type="project" value="dictyBase"/>
</dbReference>
<dbReference type="GO" id="GO:0006749">
    <property type="term" value="P:glutathione metabolic process"/>
    <property type="evidence" value="ECO:0000318"/>
    <property type="project" value="GO_Central"/>
</dbReference>
<dbReference type="GO" id="GO:0006559">
    <property type="term" value="P:L-phenylalanine catabolic process"/>
    <property type="evidence" value="ECO:0000318"/>
    <property type="project" value="GO_Central"/>
</dbReference>
<dbReference type="GO" id="GO:0006572">
    <property type="term" value="P:tyrosine catabolic process"/>
    <property type="evidence" value="ECO:0007669"/>
    <property type="project" value="UniProtKB-KW"/>
</dbReference>
<dbReference type="CDD" id="cd03191">
    <property type="entry name" value="GST_C_Zeta"/>
    <property type="match status" value="1"/>
</dbReference>
<dbReference type="CDD" id="cd03042">
    <property type="entry name" value="GST_N_Zeta"/>
    <property type="match status" value="1"/>
</dbReference>
<dbReference type="FunFam" id="1.20.1050.10:FF:000017">
    <property type="entry name" value="Maleylacetoacetate isomerase"/>
    <property type="match status" value="1"/>
</dbReference>
<dbReference type="FunFam" id="3.40.30.10:FF:000041">
    <property type="entry name" value="Maleylacetoacetate isomerase isoform 1"/>
    <property type="match status" value="1"/>
</dbReference>
<dbReference type="Gene3D" id="1.20.1050.10">
    <property type="match status" value="1"/>
</dbReference>
<dbReference type="Gene3D" id="3.40.30.10">
    <property type="entry name" value="Glutaredoxin"/>
    <property type="match status" value="1"/>
</dbReference>
<dbReference type="InterPro" id="IPR010987">
    <property type="entry name" value="Glutathione-S-Trfase_C-like"/>
</dbReference>
<dbReference type="InterPro" id="IPR036282">
    <property type="entry name" value="Glutathione-S-Trfase_C_sf"/>
</dbReference>
<dbReference type="InterPro" id="IPR040079">
    <property type="entry name" value="Glutathione_S-Trfase"/>
</dbReference>
<dbReference type="InterPro" id="IPR004045">
    <property type="entry name" value="Glutathione_S-Trfase_N"/>
</dbReference>
<dbReference type="InterPro" id="IPR004046">
    <property type="entry name" value="GST_C"/>
</dbReference>
<dbReference type="InterPro" id="IPR005955">
    <property type="entry name" value="GST_Zeta"/>
</dbReference>
<dbReference type="InterPro" id="IPR034330">
    <property type="entry name" value="GST_Zeta_C"/>
</dbReference>
<dbReference type="InterPro" id="IPR034333">
    <property type="entry name" value="GST_Zeta_N"/>
</dbReference>
<dbReference type="InterPro" id="IPR036249">
    <property type="entry name" value="Thioredoxin-like_sf"/>
</dbReference>
<dbReference type="NCBIfam" id="TIGR01262">
    <property type="entry name" value="maiA"/>
    <property type="match status" value="1"/>
</dbReference>
<dbReference type="PANTHER" id="PTHR42673">
    <property type="entry name" value="MALEYLACETOACETATE ISOMERASE"/>
    <property type="match status" value="1"/>
</dbReference>
<dbReference type="PANTHER" id="PTHR42673:SF4">
    <property type="entry name" value="MALEYLACETOACETATE ISOMERASE"/>
    <property type="match status" value="1"/>
</dbReference>
<dbReference type="Pfam" id="PF14497">
    <property type="entry name" value="GST_C_3"/>
    <property type="match status" value="1"/>
</dbReference>
<dbReference type="Pfam" id="PF13417">
    <property type="entry name" value="GST_N_3"/>
    <property type="match status" value="1"/>
</dbReference>
<dbReference type="SFLD" id="SFLDS00019">
    <property type="entry name" value="Glutathione_Transferase_(cytos"/>
    <property type="match status" value="1"/>
</dbReference>
<dbReference type="SFLD" id="SFLDG00358">
    <property type="entry name" value="Main_(cytGST)"/>
    <property type="match status" value="1"/>
</dbReference>
<dbReference type="SUPFAM" id="SSF47616">
    <property type="entry name" value="GST C-terminal domain-like"/>
    <property type="match status" value="1"/>
</dbReference>
<dbReference type="SUPFAM" id="SSF52833">
    <property type="entry name" value="Thioredoxin-like"/>
    <property type="match status" value="1"/>
</dbReference>
<dbReference type="PROSITE" id="PS50405">
    <property type="entry name" value="GST_CTER"/>
    <property type="match status" value="1"/>
</dbReference>
<dbReference type="PROSITE" id="PS50404">
    <property type="entry name" value="GST_NTER"/>
    <property type="match status" value="1"/>
</dbReference>
<sequence length="219" mass="24865">MTENKTVLYSYWRSSCSWRVRVALAYKKIKYEYKAIHLLKDGGQQKSDEYSKLNPMKAIPTLEIDGHIIGQSLAILEYLEETHPENPLMPKGSYERAIARQMMQIIGSDIQPLQNLKVLGLIAQYSGDDSKKSEWARTVITNGFNGLEKLLEKHSGKFCVGDSVSFADLCLPAQVYNANRFNVDMTPYPNITRVNQHLLTIPEFIEALPQNQPDAEPQC</sequence>
<gene>
    <name type="primary">mai</name>
    <name type="ORF">DDB_G0278155</name>
</gene>
<reference key="1">
    <citation type="journal article" date="2005" name="Nature">
        <title>The genome of the social amoeba Dictyostelium discoideum.</title>
        <authorList>
            <person name="Eichinger L."/>
            <person name="Pachebat J.A."/>
            <person name="Gloeckner G."/>
            <person name="Rajandream M.A."/>
            <person name="Sucgang R."/>
            <person name="Berriman M."/>
            <person name="Song J."/>
            <person name="Olsen R."/>
            <person name="Szafranski K."/>
            <person name="Xu Q."/>
            <person name="Tunggal B."/>
            <person name="Kummerfeld S."/>
            <person name="Madera M."/>
            <person name="Konfortov B.A."/>
            <person name="Rivero F."/>
            <person name="Bankier A.T."/>
            <person name="Lehmann R."/>
            <person name="Hamlin N."/>
            <person name="Davies R."/>
            <person name="Gaudet P."/>
            <person name="Fey P."/>
            <person name="Pilcher K."/>
            <person name="Chen G."/>
            <person name="Saunders D."/>
            <person name="Sodergren E.J."/>
            <person name="Davis P."/>
            <person name="Kerhornou A."/>
            <person name="Nie X."/>
            <person name="Hall N."/>
            <person name="Anjard C."/>
            <person name="Hemphill L."/>
            <person name="Bason N."/>
            <person name="Farbrother P."/>
            <person name="Desany B."/>
            <person name="Just E."/>
            <person name="Morio T."/>
            <person name="Rost R."/>
            <person name="Churcher C.M."/>
            <person name="Cooper J."/>
            <person name="Haydock S."/>
            <person name="van Driessche N."/>
            <person name="Cronin A."/>
            <person name="Goodhead I."/>
            <person name="Muzny D.M."/>
            <person name="Mourier T."/>
            <person name="Pain A."/>
            <person name="Lu M."/>
            <person name="Harper D."/>
            <person name="Lindsay R."/>
            <person name="Hauser H."/>
            <person name="James K.D."/>
            <person name="Quiles M."/>
            <person name="Madan Babu M."/>
            <person name="Saito T."/>
            <person name="Buchrieser C."/>
            <person name="Wardroper A."/>
            <person name="Felder M."/>
            <person name="Thangavelu M."/>
            <person name="Johnson D."/>
            <person name="Knights A."/>
            <person name="Loulseged H."/>
            <person name="Mungall K.L."/>
            <person name="Oliver K."/>
            <person name="Price C."/>
            <person name="Quail M.A."/>
            <person name="Urushihara H."/>
            <person name="Hernandez J."/>
            <person name="Rabbinowitsch E."/>
            <person name="Steffen D."/>
            <person name="Sanders M."/>
            <person name="Ma J."/>
            <person name="Kohara Y."/>
            <person name="Sharp S."/>
            <person name="Simmonds M.N."/>
            <person name="Spiegler S."/>
            <person name="Tivey A."/>
            <person name="Sugano S."/>
            <person name="White B."/>
            <person name="Walker D."/>
            <person name="Woodward J.R."/>
            <person name="Winckler T."/>
            <person name="Tanaka Y."/>
            <person name="Shaulsky G."/>
            <person name="Schleicher M."/>
            <person name="Weinstock G.M."/>
            <person name="Rosenthal A."/>
            <person name="Cox E.C."/>
            <person name="Chisholm R.L."/>
            <person name="Gibbs R.A."/>
            <person name="Loomis W.F."/>
            <person name="Platzer M."/>
            <person name="Kay R.R."/>
            <person name="Williams J.G."/>
            <person name="Dear P.H."/>
            <person name="Noegel A.A."/>
            <person name="Barrell B.G."/>
            <person name="Kuspa A."/>
        </authorList>
    </citation>
    <scope>NUCLEOTIDE SEQUENCE [LARGE SCALE GENOMIC DNA]</scope>
    <source>
        <strain>AX4</strain>
    </source>
</reference>
<proteinExistence type="inferred from homology"/>
<comment type="catalytic activity">
    <reaction>
        <text>4-maleylacetoacetate = 4-fumarylacetoacetate</text>
        <dbReference type="Rhea" id="RHEA:14817"/>
        <dbReference type="ChEBI" id="CHEBI:17105"/>
        <dbReference type="ChEBI" id="CHEBI:18034"/>
        <dbReference type="EC" id="5.2.1.2"/>
    </reaction>
</comment>
<comment type="cofactor">
    <cofactor evidence="1">
        <name>glutathione</name>
        <dbReference type="ChEBI" id="CHEBI:57925"/>
    </cofactor>
</comment>
<comment type="pathway">
    <text>Amino-acid degradation; L-phenylalanine degradation; acetoacetate and fumarate from L-phenylalanine: step 5/6.</text>
</comment>
<comment type="similarity">
    <text evidence="2">Belongs to the GST superfamily. Zeta family.</text>
</comment>
<feature type="chain" id="PRO_0000388776" description="Maleylacetoacetate isomerase">
    <location>
        <begin position="1"/>
        <end position="219"/>
    </location>
</feature>
<feature type="domain" description="GST N-terminal">
    <location>
        <begin position="4"/>
        <end position="87"/>
    </location>
</feature>
<feature type="domain" description="GST C-terminal">
    <location>
        <begin position="92"/>
        <end position="217"/>
    </location>
</feature>
<feature type="binding site" evidence="1">
    <location>
        <begin position="14"/>
        <end position="19"/>
    </location>
    <ligand>
        <name>glutathione</name>
        <dbReference type="ChEBI" id="CHEBI:57925"/>
    </ligand>
</feature>
<feature type="binding site" evidence="1">
    <location>
        <position position="45"/>
    </location>
    <ligand>
        <name>glutathione</name>
        <dbReference type="ChEBI" id="CHEBI:57925"/>
    </ligand>
</feature>
<feature type="binding site" evidence="1">
    <location>
        <begin position="71"/>
        <end position="72"/>
    </location>
    <ligand>
        <name>glutathione</name>
        <dbReference type="ChEBI" id="CHEBI:57925"/>
    </ligand>
</feature>
<feature type="binding site" evidence="1">
    <location>
        <position position="111"/>
    </location>
    <ligand>
        <name>glutathione</name>
        <dbReference type="ChEBI" id="CHEBI:57925"/>
    </ligand>
</feature>
<feature type="binding site" evidence="1">
    <location>
        <begin position="115"/>
        <end position="117"/>
    </location>
    <ligand>
        <name>glutathione</name>
        <dbReference type="ChEBI" id="CHEBI:57925"/>
    </ligand>
</feature>
<keyword id="KW-0413">Isomerase</keyword>
<keyword id="KW-0585">Phenylalanine catabolism</keyword>
<keyword id="KW-1185">Reference proteome</keyword>
<keyword id="KW-0808">Transferase</keyword>
<keyword id="KW-0828">Tyrosine catabolism</keyword>
<protein>
    <recommendedName>
        <fullName>Maleylacetoacetate isomerase</fullName>
        <shortName>MAAI</shortName>
        <ecNumber>5.2.1.2</ecNumber>
    </recommendedName>
</protein>
<organism>
    <name type="scientific">Dictyostelium discoideum</name>
    <name type="common">Social amoeba</name>
    <dbReference type="NCBI Taxonomy" id="44689"/>
    <lineage>
        <taxon>Eukaryota</taxon>
        <taxon>Amoebozoa</taxon>
        <taxon>Evosea</taxon>
        <taxon>Eumycetozoa</taxon>
        <taxon>Dictyostelia</taxon>
        <taxon>Dictyosteliales</taxon>
        <taxon>Dictyosteliaceae</taxon>
        <taxon>Dictyostelium</taxon>
    </lineage>
</organism>
<name>MAAI_DICDI</name>
<evidence type="ECO:0000250" key="1"/>
<evidence type="ECO:0000305" key="2"/>